<protein>
    <recommendedName>
        <fullName>Hsp70-Hsp90 organizing protein 2</fullName>
        <shortName>AtHop2</shortName>
    </recommendedName>
</protein>
<comment type="function">
    <text evidence="1">Mediates the association of the molecular chaperones HSP70 and HSP90. Mediates nuclear encoded chloroplast preproteins binding to HSP90 prior to chloroplastic sorting (By similarity).</text>
</comment>
<comment type="subunit">
    <text evidence="1">Co-chaperone that forms a complex with HSP70 and HSP90 and preproteins (e.g. chloroplast preproteins) (By similarity).</text>
</comment>
<comment type="subcellular location">
    <subcellularLocation>
        <location evidence="1">Cytoplasm</location>
    </subcellularLocation>
    <subcellularLocation>
        <location evidence="1">Nucleus</location>
    </subcellularLocation>
</comment>
<comment type="domain">
    <text evidence="1">The tetratricopeptide repeat (TPR) domain, forming a carboxylate clamp (CC), mediates interaction with the highly conserved 'EEVD' motif at the C-terminal ends of HSP90 and HSP70.</text>
</comment>
<comment type="PTM">
    <text evidence="1">Phosphorylated.</text>
</comment>
<comment type="PTM">
    <text evidence="1">Acetylated.</text>
</comment>
<comment type="sequence caution" evidence="4">
    <conflict type="erroneous gene model prediction">
        <sequence resource="EMBL-CDS" id="AAF19538"/>
    </conflict>
</comment>
<gene>
    <name type="primary">HOP2</name>
    <name type="ordered locus">At1g62740</name>
    <name type="ORF">F23N19.10</name>
</gene>
<evidence type="ECO:0000250" key="1"/>
<evidence type="ECO:0000255" key="2"/>
<evidence type="ECO:0000256" key="3">
    <source>
        <dbReference type="SAM" id="MobiDB-lite"/>
    </source>
</evidence>
<evidence type="ECO:0000305" key="4"/>
<evidence type="ECO:0007744" key="5">
    <source>
    </source>
</evidence>
<reference key="1">
    <citation type="journal article" date="2000" name="Nature">
        <title>Sequence and analysis of chromosome 1 of the plant Arabidopsis thaliana.</title>
        <authorList>
            <person name="Theologis A."/>
            <person name="Ecker J.R."/>
            <person name="Palm C.J."/>
            <person name="Federspiel N.A."/>
            <person name="Kaul S."/>
            <person name="White O."/>
            <person name="Alonso J."/>
            <person name="Altafi H."/>
            <person name="Araujo R."/>
            <person name="Bowman C.L."/>
            <person name="Brooks S.Y."/>
            <person name="Buehler E."/>
            <person name="Chan A."/>
            <person name="Chao Q."/>
            <person name="Chen H."/>
            <person name="Cheuk R.F."/>
            <person name="Chin C.W."/>
            <person name="Chung M.K."/>
            <person name="Conn L."/>
            <person name="Conway A.B."/>
            <person name="Conway A.R."/>
            <person name="Creasy T.H."/>
            <person name="Dewar K."/>
            <person name="Dunn P."/>
            <person name="Etgu P."/>
            <person name="Feldblyum T.V."/>
            <person name="Feng J.-D."/>
            <person name="Fong B."/>
            <person name="Fujii C.Y."/>
            <person name="Gill J.E."/>
            <person name="Goldsmith A.D."/>
            <person name="Haas B."/>
            <person name="Hansen N.F."/>
            <person name="Hughes B."/>
            <person name="Huizar L."/>
            <person name="Hunter J.L."/>
            <person name="Jenkins J."/>
            <person name="Johnson-Hopson C."/>
            <person name="Khan S."/>
            <person name="Khaykin E."/>
            <person name="Kim C.J."/>
            <person name="Koo H.L."/>
            <person name="Kremenetskaia I."/>
            <person name="Kurtz D.B."/>
            <person name="Kwan A."/>
            <person name="Lam B."/>
            <person name="Langin-Hooper S."/>
            <person name="Lee A."/>
            <person name="Lee J.M."/>
            <person name="Lenz C.A."/>
            <person name="Li J.H."/>
            <person name="Li Y.-P."/>
            <person name="Lin X."/>
            <person name="Liu S.X."/>
            <person name="Liu Z.A."/>
            <person name="Luros J.S."/>
            <person name="Maiti R."/>
            <person name="Marziali A."/>
            <person name="Militscher J."/>
            <person name="Miranda M."/>
            <person name="Nguyen M."/>
            <person name="Nierman W.C."/>
            <person name="Osborne B.I."/>
            <person name="Pai G."/>
            <person name="Peterson J."/>
            <person name="Pham P.K."/>
            <person name="Rizzo M."/>
            <person name="Rooney T."/>
            <person name="Rowley D."/>
            <person name="Sakano H."/>
            <person name="Salzberg S.L."/>
            <person name="Schwartz J.R."/>
            <person name="Shinn P."/>
            <person name="Southwick A.M."/>
            <person name="Sun H."/>
            <person name="Tallon L.J."/>
            <person name="Tambunga G."/>
            <person name="Toriumi M.J."/>
            <person name="Town C.D."/>
            <person name="Utterback T."/>
            <person name="Van Aken S."/>
            <person name="Vaysberg M."/>
            <person name="Vysotskaia V.S."/>
            <person name="Walker M."/>
            <person name="Wu D."/>
            <person name="Yu G."/>
            <person name="Fraser C.M."/>
            <person name="Venter J.C."/>
            <person name="Davis R.W."/>
        </authorList>
    </citation>
    <scope>NUCLEOTIDE SEQUENCE [LARGE SCALE GENOMIC DNA]</scope>
    <source>
        <strain>cv. Columbia</strain>
    </source>
</reference>
<reference key="2">
    <citation type="journal article" date="2017" name="Plant J.">
        <title>Araport11: a complete reannotation of the Arabidopsis thaliana reference genome.</title>
        <authorList>
            <person name="Cheng C.Y."/>
            <person name="Krishnakumar V."/>
            <person name="Chan A.P."/>
            <person name="Thibaud-Nissen F."/>
            <person name="Schobel S."/>
            <person name="Town C.D."/>
        </authorList>
    </citation>
    <scope>GENOME REANNOTATION</scope>
    <source>
        <strain>cv. Columbia</strain>
    </source>
</reference>
<reference key="3">
    <citation type="journal article" date="2003" name="Science">
        <title>Empirical analysis of transcriptional activity in the Arabidopsis genome.</title>
        <authorList>
            <person name="Yamada K."/>
            <person name="Lim J."/>
            <person name="Dale J.M."/>
            <person name="Chen H."/>
            <person name="Shinn P."/>
            <person name="Palm C.J."/>
            <person name="Southwick A.M."/>
            <person name="Wu H.C."/>
            <person name="Kim C.J."/>
            <person name="Nguyen M."/>
            <person name="Pham P.K."/>
            <person name="Cheuk R.F."/>
            <person name="Karlin-Newmann G."/>
            <person name="Liu S.X."/>
            <person name="Lam B."/>
            <person name="Sakano H."/>
            <person name="Wu T."/>
            <person name="Yu G."/>
            <person name="Miranda M."/>
            <person name="Quach H.L."/>
            <person name="Tripp M."/>
            <person name="Chang C.H."/>
            <person name="Lee J.M."/>
            <person name="Toriumi M.J."/>
            <person name="Chan M.M."/>
            <person name="Tang C.C."/>
            <person name="Onodera C.S."/>
            <person name="Deng J.M."/>
            <person name="Akiyama K."/>
            <person name="Ansari Y."/>
            <person name="Arakawa T."/>
            <person name="Banh J."/>
            <person name="Banno F."/>
            <person name="Bowser L."/>
            <person name="Brooks S.Y."/>
            <person name="Carninci P."/>
            <person name="Chao Q."/>
            <person name="Choy N."/>
            <person name="Enju A."/>
            <person name="Goldsmith A.D."/>
            <person name="Gurjal M."/>
            <person name="Hansen N.F."/>
            <person name="Hayashizaki Y."/>
            <person name="Johnson-Hopson C."/>
            <person name="Hsuan V.W."/>
            <person name="Iida K."/>
            <person name="Karnes M."/>
            <person name="Khan S."/>
            <person name="Koesema E."/>
            <person name="Ishida J."/>
            <person name="Jiang P.X."/>
            <person name="Jones T."/>
            <person name="Kawai J."/>
            <person name="Kamiya A."/>
            <person name="Meyers C."/>
            <person name="Nakajima M."/>
            <person name="Narusaka M."/>
            <person name="Seki M."/>
            <person name="Sakurai T."/>
            <person name="Satou M."/>
            <person name="Tamse R."/>
            <person name="Vaysberg M."/>
            <person name="Wallender E.K."/>
            <person name="Wong C."/>
            <person name="Yamamura Y."/>
            <person name="Yuan S."/>
            <person name="Shinozaki K."/>
            <person name="Davis R.W."/>
            <person name="Theologis A."/>
            <person name="Ecker J.R."/>
        </authorList>
    </citation>
    <scope>NUCLEOTIDE SEQUENCE [LARGE SCALE MRNA]</scope>
    <source>
        <strain>cv. Columbia</strain>
    </source>
</reference>
<reference key="4">
    <citation type="submission" date="2004-10" db="EMBL/GenBank/DDBJ databases">
        <title>Arabidopsis ORF clones.</title>
        <authorList>
            <person name="Cheuk R.F."/>
            <person name="Chen H."/>
            <person name="Kim C.J."/>
            <person name="Shinn P."/>
            <person name="Ecker J.R."/>
        </authorList>
    </citation>
    <scope>NUCLEOTIDE SEQUENCE [LARGE SCALE MRNA]</scope>
    <source>
        <strain>cv. Columbia</strain>
    </source>
</reference>
<reference key="5">
    <citation type="submission" date="2006-07" db="EMBL/GenBank/DDBJ databases">
        <title>Large-scale analysis of RIKEN Arabidopsis full-length (RAFL) cDNAs.</title>
        <authorList>
            <person name="Totoki Y."/>
            <person name="Seki M."/>
            <person name="Ishida J."/>
            <person name="Nakajima M."/>
            <person name="Enju A."/>
            <person name="Kamiya A."/>
            <person name="Narusaka M."/>
            <person name="Shin-i T."/>
            <person name="Nakagawa M."/>
            <person name="Sakamoto N."/>
            <person name="Oishi K."/>
            <person name="Kohara Y."/>
            <person name="Kobayashi M."/>
            <person name="Toyoda A."/>
            <person name="Sakaki Y."/>
            <person name="Sakurai T."/>
            <person name="Iida K."/>
            <person name="Akiyama K."/>
            <person name="Satou M."/>
            <person name="Toyoda T."/>
            <person name="Konagaya A."/>
            <person name="Carninci P."/>
            <person name="Kawai J."/>
            <person name="Hayashizaki Y."/>
            <person name="Shinozaki K."/>
        </authorList>
    </citation>
    <scope>NUCLEOTIDE SEQUENCE [LARGE SCALE MRNA]</scope>
    <source>
        <strain>cv. Columbia</strain>
    </source>
</reference>
<reference key="6">
    <citation type="journal article" date="2008" name="J. Proteome Res.">
        <title>Site-specific phosphorylation profiling of Arabidopsis proteins by mass spectrometry and peptide chip analysis.</title>
        <authorList>
            <person name="de la Fuente van Bentem S."/>
            <person name="Anrather D."/>
            <person name="Dohnal I."/>
            <person name="Roitinger E."/>
            <person name="Csaszar E."/>
            <person name="Joore J."/>
            <person name="Buijnink J."/>
            <person name="Carreri A."/>
            <person name="Forzani C."/>
            <person name="Lorkovic Z.J."/>
            <person name="Barta A."/>
            <person name="Lecourieux D."/>
            <person name="Verhounig A."/>
            <person name="Jonak C."/>
            <person name="Hirt H."/>
        </authorList>
    </citation>
    <scope>PHOSPHORYLATION [LARGE SCALE ANALYSIS] AT SER-168</scope>
    <scope>IDENTIFICATION BY MASS SPECTROMETRY [LARGE SCALE ANALYSIS]</scope>
    <source>
        <tissue>Root</tissue>
    </source>
</reference>
<reference key="7">
    <citation type="journal article" date="2010" name="PLoS ONE">
        <title>In silico identification of carboxylate clamp type tetratricopeptide repeat proteins in Arabidopsis and rice as putative co-chaperones of Hsp90/Hsp70.</title>
        <authorList>
            <person name="Prasad B.D."/>
            <person name="Goel S."/>
            <person name="Krishna P."/>
        </authorList>
    </citation>
    <scope>GENE FAMILY</scope>
    <scope>NOMENCLATURE</scope>
</reference>
<name>HSOP2_ARATH</name>
<dbReference type="EMBL" id="AC007190">
    <property type="protein sequence ID" value="AAF19538.1"/>
    <property type="status" value="ALT_SEQ"/>
    <property type="molecule type" value="Genomic_DNA"/>
</dbReference>
<dbReference type="EMBL" id="CP002684">
    <property type="protein sequence ID" value="AEE33999.1"/>
    <property type="molecule type" value="Genomic_DNA"/>
</dbReference>
<dbReference type="EMBL" id="BT005735">
    <property type="protein sequence ID" value="AAO64147.1"/>
    <property type="molecule type" value="mRNA"/>
</dbReference>
<dbReference type="EMBL" id="BT015924">
    <property type="protein sequence ID" value="AAU95460.1"/>
    <property type="molecule type" value="mRNA"/>
</dbReference>
<dbReference type="EMBL" id="BT020538">
    <property type="protein sequence ID" value="AAW70384.1"/>
    <property type="molecule type" value="mRNA"/>
</dbReference>
<dbReference type="EMBL" id="AK228637">
    <property type="protein sequence ID" value="BAF00546.1"/>
    <property type="molecule type" value="mRNA"/>
</dbReference>
<dbReference type="RefSeq" id="NP_176461.1">
    <property type="nucleotide sequence ID" value="NM_104951.4"/>
</dbReference>
<dbReference type="SMR" id="Q5XEP2"/>
<dbReference type="BioGRID" id="27793">
    <property type="interactions" value="19"/>
</dbReference>
<dbReference type="FunCoup" id="Q5XEP2">
    <property type="interactions" value="3781"/>
</dbReference>
<dbReference type="IntAct" id="Q5XEP2">
    <property type="interactions" value="2"/>
</dbReference>
<dbReference type="STRING" id="3702.Q5XEP2"/>
<dbReference type="iPTMnet" id="Q5XEP2"/>
<dbReference type="MetOSite" id="Q5XEP2"/>
<dbReference type="PaxDb" id="3702-AT1G62740.1"/>
<dbReference type="ProteomicsDB" id="230154"/>
<dbReference type="EnsemblPlants" id="AT1G62740.1">
    <property type="protein sequence ID" value="AT1G62740.1"/>
    <property type="gene ID" value="AT1G62740"/>
</dbReference>
<dbReference type="GeneID" id="842572"/>
<dbReference type="Gramene" id="AT1G62740.1">
    <property type="protein sequence ID" value="AT1G62740.1"/>
    <property type="gene ID" value="AT1G62740"/>
</dbReference>
<dbReference type="KEGG" id="ath:AT1G62740"/>
<dbReference type="Araport" id="AT1G62740"/>
<dbReference type="TAIR" id="AT1G62740">
    <property type="gene designation" value="HOP2"/>
</dbReference>
<dbReference type="eggNOG" id="KOG0548">
    <property type="taxonomic scope" value="Eukaryota"/>
</dbReference>
<dbReference type="HOGENOM" id="CLU_000134_46_5_1"/>
<dbReference type="InParanoid" id="Q5XEP2"/>
<dbReference type="OMA" id="KGREHRA"/>
<dbReference type="OrthoDB" id="2423701at2759"/>
<dbReference type="PhylomeDB" id="Q5XEP2"/>
<dbReference type="PRO" id="PR:Q5XEP2"/>
<dbReference type="Proteomes" id="UP000006548">
    <property type="component" value="Chromosome 1"/>
</dbReference>
<dbReference type="ExpressionAtlas" id="Q5XEP2">
    <property type="expression patterns" value="baseline and differential"/>
</dbReference>
<dbReference type="GO" id="GO:0005829">
    <property type="term" value="C:cytosol"/>
    <property type="evidence" value="ECO:0007005"/>
    <property type="project" value="TAIR"/>
</dbReference>
<dbReference type="GO" id="GO:0005634">
    <property type="term" value="C:nucleus"/>
    <property type="evidence" value="ECO:0007005"/>
    <property type="project" value="TAIR"/>
</dbReference>
<dbReference type="GO" id="GO:0051879">
    <property type="term" value="F:Hsp90 protein binding"/>
    <property type="evidence" value="ECO:0000250"/>
    <property type="project" value="UniProtKB"/>
</dbReference>
<dbReference type="GO" id="GO:0070678">
    <property type="term" value="F:preprotein binding"/>
    <property type="evidence" value="ECO:0000250"/>
    <property type="project" value="UniProtKB"/>
</dbReference>
<dbReference type="GO" id="GO:0051131">
    <property type="term" value="P:chaperone-mediated protein complex assembly"/>
    <property type="evidence" value="ECO:0000250"/>
    <property type="project" value="UniProtKB"/>
</dbReference>
<dbReference type="GO" id="GO:0046686">
    <property type="term" value="P:response to cadmium ion"/>
    <property type="evidence" value="ECO:0000270"/>
    <property type="project" value="TAIR"/>
</dbReference>
<dbReference type="FunFam" id="1.25.40.10:FF:000102">
    <property type="entry name" value="hsp70-Hsp90 organizing protein 3-like"/>
    <property type="match status" value="1"/>
</dbReference>
<dbReference type="FunFam" id="1.10.260.100:FF:000004">
    <property type="entry name" value="Putative stress-induced-phosphoprotein 1"/>
    <property type="match status" value="1"/>
</dbReference>
<dbReference type="FunFam" id="1.25.40.10:FF:000010">
    <property type="entry name" value="Stress-induced phosphoprotein 1"/>
    <property type="match status" value="1"/>
</dbReference>
<dbReference type="FunFam" id="1.25.40.10:FF:000020">
    <property type="entry name" value="Stress-induced phosphoprotein 1"/>
    <property type="match status" value="1"/>
</dbReference>
<dbReference type="FunFam" id="1.10.260.100:FF:000002">
    <property type="entry name" value="Stress-induced-phosphoprotein 1 (Hsp70/Hsp90-organizing)"/>
    <property type="match status" value="1"/>
</dbReference>
<dbReference type="Gene3D" id="1.10.260.100">
    <property type="match status" value="2"/>
</dbReference>
<dbReference type="Gene3D" id="1.25.40.10">
    <property type="entry name" value="Tetratricopeptide repeat domain"/>
    <property type="match status" value="3"/>
</dbReference>
<dbReference type="InterPro" id="IPR041243">
    <property type="entry name" value="STI1/HOP_DP"/>
</dbReference>
<dbReference type="InterPro" id="IPR006636">
    <property type="entry name" value="STI1_HS-bd"/>
</dbReference>
<dbReference type="InterPro" id="IPR011990">
    <property type="entry name" value="TPR-like_helical_dom_sf"/>
</dbReference>
<dbReference type="InterPro" id="IPR019734">
    <property type="entry name" value="TPR_rpt"/>
</dbReference>
<dbReference type="PANTHER" id="PTHR22904:SF536">
    <property type="entry name" value="HSP70-HSP90 ORGANIZING PROTEIN 1-RELATED"/>
    <property type="match status" value="1"/>
</dbReference>
<dbReference type="PANTHER" id="PTHR22904">
    <property type="entry name" value="TPR REPEAT CONTAINING PROTEIN"/>
    <property type="match status" value="1"/>
</dbReference>
<dbReference type="Pfam" id="PF17830">
    <property type="entry name" value="STI1-HOP_DP"/>
    <property type="match status" value="2"/>
</dbReference>
<dbReference type="Pfam" id="PF00515">
    <property type="entry name" value="TPR_1"/>
    <property type="match status" value="2"/>
</dbReference>
<dbReference type="Pfam" id="PF13414">
    <property type="entry name" value="TPR_11"/>
    <property type="match status" value="1"/>
</dbReference>
<dbReference type="SMART" id="SM00727">
    <property type="entry name" value="STI1"/>
    <property type="match status" value="2"/>
</dbReference>
<dbReference type="SMART" id="SM00028">
    <property type="entry name" value="TPR"/>
    <property type="match status" value="9"/>
</dbReference>
<dbReference type="SUPFAM" id="SSF48452">
    <property type="entry name" value="TPR-like"/>
    <property type="match status" value="3"/>
</dbReference>
<dbReference type="PROSITE" id="PS50005">
    <property type="entry name" value="TPR"/>
    <property type="match status" value="9"/>
</dbReference>
<dbReference type="PROSITE" id="PS50293">
    <property type="entry name" value="TPR_REGION"/>
    <property type="match status" value="2"/>
</dbReference>
<proteinExistence type="evidence at protein level"/>
<sequence length="571" mass="64520">MADEAKAKGNAAFSSGDFNSAVNHFTDAINLTPTNHVLFSNRSAAHASLNHYDEALSDAKKTVELKPDWGKGYSRLGAAHLGLNQFDEAVEAYSKGLEIDPSNEGLKSGLADAKASASRSRASAPNPFGDAFQGPEMWSKLTADPSTRGLLKQPDFVNMMKEIQRNPSNLNLYLQDQRVMQALGVLLNIQIRTQQAGDDMEIGEEEMAVPSRKEPEVEKKRKPEPEPEPEPEFGEEKQKKLKAQKEKELGNAAYKKKDFETAIQHYSTAMEIDDEDISYITNRAAVHLEMGKYDECIKDCDKAVERGRELRSDYKMVAKALTRKGTALGKMAKVSKDYEPVIQTYQKALTEHRNPETLKRLNEAERAKKELEQQEYYDPNIGDEEREKGNDFFKEQKYPDAVRHYTEAIKRNPKDPRAYSNRAACYTKLGAMPEGLKDAEKCIELDPTFLKGYSRKGAVQFFMKEYDNAMETYQKGLEHDPNNQELLDGVKRCVQQINKANRGDLTPEELKERQAKGMQDPEIQNILTDPVMRQVLSDLQENPAAAQKHMQNPMIMNKIQKLISSGIVQMK</sequence>
<accession>Q5XEP2</accession>
<accession>Q84TJ2</accession>
<accession>Q9SI76</accession>
<organism>
    <name type="scientific">Arabidopsis thaliana</name>
    <name type="common">Mouse-ear cress</name>
    <dbReference type="NCBI Taxonomy" id="3702"/>
    <lineage>
        <taxon>Eukaryota</taxon>
        <taxon>Viridiplantae</taxon>
        <taxon>Streptophyta</taxon>
        <taxon>Embryophyta</taxon>
        <taxon>Tracheophyta</taxon>
        <taxon>Spermatophyta</taxon>
        <taxon>Magnoliopsida</taxon>
        <taxon>eudicotyledons</taxon>
        <taxon>Gunneridae</taxon>
        <taxon>Pentapetalae</taxon>
        <taxon>rosids</taxon>
        <taxon>malvids</taxon>
        <taxon>Brassicales</taxon>
        <taxon>Brassicaceae</taxon>
        <taxon>Camelineae</taxon>
        <taxon>Arabidopsis</taxon>
    </lineage>
</organism>
<keyword id="KW-0007">Acetylation</keyword>
<keyword id="KW-0143">Chaperone</keyword>
<keyword id="KW-0963">Cytoplasm</keyword>
<keyword id="KW-0539">Nucleus</keyword>
<keyword id="KW-0597">Phosphoprotein</keyword>
<keyword id="KW-1185">Reference proteome</keyword>
<keyword id="KW-0677">Repeat</keyword>
<keyword id="KW-0346">Stress response</keyword>
<keyword id="KW-0802">TPR repeat</keyword>
<feature type="chain" id="PRO_0000426702" description="Hsp70-Hsp90 organizing protein 2">
    <location>
        <begin position="1"/>
        <end position="571"/>
    </location>
</feature>
<feature type="repeat" description="TPR 1">
    <location>
        <begin position="2"/>
        <end position="35"/>
    </location>
</feature>
<feature type="repeat" description="TPR 2">
    <location>
        <begin position="37"/>
        <end position="69"/>
    </location>
</feature>
<feature type="repeat" description="TPR 3">
    <location>
        <begin position="70"/>
        <end position="103"/>
    </location>
</feature>
<feature type="domain" description="STI1 1">
    <location>
        <begin position="134"/>
        <end position="173"/>
    </location>
</feature>
<feature type="repeat" description="TPR 4">
    <location>
        <begin position="243"/>
        <end position="276"/>
    </location>
</feature>
<feature type="repeat" description="TPR 5">
    <location>
        <begin position="278"/>
        <end position="310"/>
    </location>
</feature>
<feature type="repeat" description="TPR 6">
    <location>
        <begin position="322"/>
        <end position="355"/>
    </location>
</feature>
<feature type="repeat" description="TPR 7">
    <location>
        <begin position="382"/>
        <end position="415"/>
    </location>
</feature>
<feature type="repeat" description="TPR 8">
    <location>
        <begin position="417"/>
        <end position="449"/>
    </location>
</feature>
<feature type="repeat" description="TPR 9">
    <location>
        <begin position="450"/>
        <end position="483"/>
    </location>
</feature>
<feature type="domain" description="STI1 2">
    <location>
        <begin position="520"/>
        <end position="559"/>
    </location>
</feature>
<feature type="region of interest" description="Disordered" evidence="3">
    <location>
        <begin position="117"/>
        <end position="137"/>
    </location>
</feature>
<feature type="region of interest" description="Disordered" evidence="3">
    <location>
        <begin position="198"/>
        <end position="245"/>
    </location>
</feature>
<feature type="short sequence motif" description="Bipartite nuclear localization signal" evidence="2">
    <location>
        <begin position="240"/>
        <end position="257"/>
    </location>
</feature>
<feature type="compositionally biased region" description="Acidic residues" evidence="3">
    <location>
        <begin position="198"/>
        <end position="207"/>
    </location>
</feature>
<feature type="compositionally biased region" description="Basic and acidic residues" evidence="3">
    <location>
        <begin position="211"/>
        <end position="225"/>
    </location>
</feature>
<feature type="compositionally biased region" description="Basic and acidic residues" evidence="3">
    <location>
        <begin position="234"/>
        <end position="245"/>
    </location>
</feature>
<feature type="modified residue" description="Phosphoserine" evidence="5">
    <location>
        <position position="168"/>
    </location>
</feature>
<feature type="sequence conflict" description="In Ref. 3; AAO64147 and 5; BAF00546." evidence="4" ref="3 5">
    <original>L</original>
    <variation>I</variation>
    <location>
        <position position="349"/>
    </location>
</feature>